<protein>
    <recommendedName>
        <fullName>DNA-directed RNA polymerases I, II, and III subunit RPABC1</fullName>
        <shortName>RNA polymerases I, II, and III subunit ABC1</shortName>
    </recommendedName>
    <alternativeName>
        <fullName>RPB5 homolog</fullName>
    </alternativeName>
</protein>
<comment type="function">
    <text evidence="1">DNA-dependent RNA polymerase catalyzes the transcription of DNA into RNA using the four ribonucleoside triphosphates as substrates. Common component of RNA polymerases I, II and III which synthesize ribosomal RNA precursors, mRNA precursors and many functional non-coding RNAs, and small RNAs, such as 5S rRNA and tRNAs, respectively. Pol II is the central component of the basal RNA polymerase II transcription machinery. Pols are composed of mobile elements that move relative to each other. In Pol II, RPB5 is part of the lower jaw surrounding the central large cleft and thought to grab the incoming DNA template. Seems to be the major component in this process (By similarity).</text>
</comment>
<comment type="subunit">
    <text evidence="1">Component of the RNA polymerase I (Pol I), RNA polymerase II (Pol II) and RNA polymerase III (Pol III) complexes consisting of at least 13, 12 and 17 subunits, respectively. In RNA Pol II, this subunit is present in 2-fold molar excess over the other subunits (By similarity).</text>
</comment>
<comment type="subcellular location">
    <subcellularLocation>
        <location evidence="1">Nucleus</location>
    </subcellularLocation>
</comment>
<comment type="similarity">
    <text evidence="2">Belongs to the archaeal Rpo5/eukaryotic RPB5 RNA polymerase subunit family.</text>
</comment>
<accession>Q9N5K2</accession>
<name>RPAB1_CAEEL</name>
<feature type="chain" id="PRO_0000146078" description="DNA-directed RNA polymerases I, II, and III subunit RPABC1">
    <location>
        <begin position="1"/>
        <end position="211"/>
    </location>
</feature>
<reference key="1">
    <citation type="journal article" date="1998" name="Science">
        <title>Genome sequence of the nematode C. elegans: a platform for investigating biology.</title>
        <authorList>
            <consortium name="The C. elegans sequencing consortium"/>
        </authorList>
    </citation>
    <scope>NUCLEOTIDE SEQUENCE [LARGE SCALE GENOMIC DNA]</scope>
    <source>
        <strain>Bristol N2</strain>
    </source>
</reference>
<keyword id="KW-0240">DNA-directed RNA polymerase</keyword>
<keyword id="KW-0539">Nucleus</keyword>
<keyword id="KW-1185">Reference proteome</keyword>
<keyword id="KW-0804">Transcription</keyword>
<proteinExistence type="inferred from homology"/>
<evidence type="ECO:0000250" key="1"/>
<evidence type="ECO:0000305" key="2"/>
<organism>
    <name type="scientific">Caenorhabditis elegans</name>
    <dbReference type="NCBI Taxonomy" id="6239"/>
    <lineage>
        <taxon>Eukaryota</taxon>
        <taxon>Metazoa</taxon>
        <taxon>Ecdysozoa</taxon>
        <taxon>Nematoda</taxon>
        <taxon>Chromadorea</taxon>
        <taxon>Rhabditida</taxon>
        <taxon>Rhabditina</taxon>
        <taxon>Rhabditomorpha</taxon>
        <taxon>Rhabditoidea</taxon>
        <taxon>Rhabditidae</taxon>
        <taxon>Peloderinae</taxon>
        <taxon>Caenorhabditis</taxon>
    </lineage>
</organism>
<sequence>MADDELETYRLWRIRKTVLQMVHDRGYLVAQDELDQPLETFKVQYGDRPSEKKPARSDLTILVAHNDDPADQMFVFFPEDAKIGIKTIKAICQQMQEQNISRAIIVVQTGMTPSAKQSIGDMAPKYMLEHFLEAELMVNITEHELVPEHVVMTAEEKAELLARYKLKDSQLPRIQQCDPVARYFGLRRGQVVKIIRPSETAGRYITYRLVV</sequence>
<dbReference type="EMBL" id="FO081567">
    <property type="protein sequence ID" value="CCD72467.1"/>
    <property type="molecule type" value="Genomic_DNA"/>
</dbReference>
<dbReference type="RefSeq" id="NP_491961.1">
    <property type="nucleotide sequence ID" value="NM_059560.5"/>
</dbReference>
<dbReference type="SMR" id="Q9N5K2"/>
<dbReference type="BioGRID" id="37858">
    <property type="interactions" value="32"/>
</dbReference>
<dbReference type="ComplexPortal" id="CPX-2812">
    <property type="entry name" value="DNA-directed RNA polymerase III complex"/>
</dbReference>
<dbReference type="ComplexPortal" id="CPX-8913">
    <property type="entry name" value="DNA-directed RNA polymerase I complex"/>
</dbReference>
<dbReference type="FunCoup" id="Q9N5K2">
    <property type="interactions" value="2809"/>
</dbReference>
<dbReference type="IntAct" id="Q9N5K2">
    <property type="interactions" value="1"/>
</dbReference>
<dbReference type="STRING" id="6239.H27M09.2.1"/>
<dbReference type="PaxDb" id="6239-H27M09.2"/>
<dbReference type="PeptideAtlas" id="Q9N5K2"/>
<dbReference type="EnsemblMetazoa" id="H27M09.2.1">
    <property type="protein sequence ID" value="H27M09.2.1"/>
    <property type="gene ID" value="WBGene00019246"/>
</dbReference>
<dbReference type="GeneID" id="172412"/>
<dbReference type="KEGG" id="cel:CELE_H27M09.2"/>
<dbReference type="AGR" id="WB:WBGene00019246"/>
<dbReference type="CTD" id="172412"/>
<dbReference type="WormBase" id="H27M09.2">
    <property type="protein sequence ID" value="CE23831"/>
    <property type="gene ID" value="WBGene00019246"/>
    <property type="gene designation" value="rpb-5"/>
</dbReference>
<dbReference type="eggNOG" id="KOG3218">
    <property type="taxonomic scope" value="Eukaryota"/>
</dbReference>
<dbReference type="GeneTree" id="ENSGT00390000013841"/>
<dbReference type="HOGENOM" id="CLU_058320_0_1_1"/>
<dbReference type="InParanoid" id="Q9N5K2"/>
<dbReference type="OMA" id="VRDRGYF"/>
<dbReference type="OrthoDB" id="248779at2759"/>
<dbReference type="PhylomeDB" id="Q9N5K2"/>
<dbReference type="Reactome" id="R-CEL-112382">
    <property type="pathway name" value="Formation of RNA Pol II elongation complex"/>
</dbReference>
<dbReference type="Reactome" id="R-CEL-113418">
    <property type="pathway name" value="Formation of the Early Elongation Complex"/>
</dbReference>
<dbReference type="Reactome" id="R-CEL-5250924">
    <property type="pathway name" value="B-WICH complex positively regulates rRNA expression"/>
</dbReference>
<dbReference type="Reactome" id="R-CEL-5578749">
    <property type="pathway name" value="Transcriptional regulation by small RNAs"/>
</dbReference>
<dbReference type="Reactome" id="R-CEL-674695">
    <property type="pathway name" value="RNA Polymerase II Pre-transcription Events"/>
</dbReference>
<dbReference type="Reactome" id="R-CEL-6781823">
    <property type="pathway name" value="Formation of TC-NER Pre-Incision Complex"/>
</dbReference>
<dbReference type="Reactome" id="R-CEL-6782135">
    <property type="pathway name" value="Dual incision in TC-NER"/>
</dbReference>
<dbReference type="Reactome" id="R-CEL-6782210">
    <property type="pathway name" value="Gap-filling DNA repair synthesis and ligation in TC-NER"/>
</dbReference>
<dbReference type="Reactome" id="R-CEL-6796648">
    <property type="pathway name" value="TP53 Regulates Transcription of DNA Repair Genes"/>
</dbReference>
<dbReference type="Reactome" id="R-CEL-6803529">
    <property type="pathway name" value="FGFR2 alternative splicing"/>
</dbReference>
<dbReference type="Reactome" id="R-CEL-6807505">
    <property type="pathway name" value="RNA polymerase II transcribes snRNA genes"/>
</dbReference>
<dbReference type="Reactome" id="R-CEL-72086">
    <property type="pathway name" value="mRNA Capping"/>
</dbReference>
<dbReference type="Reactome" id="R-CEL-72163">
    <property type="pathway name" value="mRNA Splicing - Major Pathway"/>
</dbReference>
<dbReference type="Reactome" id="R-CEL-72165">
    <property type="pathway name" value="mRNA Splicing - Minor Pathway"/>
</dbReference>
<dbReference type="Reactome" id="R-CEL-72203">
    <property type="pathway name" value="Processing of Capped Intron-Containing Pre-mRNA"/>
</dbReference>
<dbReference type="Reactome" id="R-CEL-73762">
    <property type="pathway name" value="RNA Polymerase I Transcription Initiation"/>
</dbReference>
<dbReference type="Reactome" id="R-CEL-73772">
    <property type="pathway name" value="RNA Polymerase I Promoter Escape"/>
</dbReference>
<dbReference type="Reactome" id="R-CEL-73776">
    <property type="pathway name" value="RNA Polymerase II Promoter Escape"/>
</dbReference>
<dbReference type="Reactome" id="R-CEL-73779">
    <property type="pathway name" value="RNA Polymerase II Transcription Pre-Initiation And Promoter Opening"/>
</dbReference>
<dbReference type="Reactome" id="R-CEL-75953">
    <property type="pathway name" value="RNA Polymerase II Transcription Initiation"/>
</dbReference>
<dbReference type="Reactome" id="R-CEL-75955">
    <property type="pathway name" value="RNA Polymerase II Transcription Elongation"/>
</dbReference>
<dbReference type="Reactome" id="R-CEL-76042">
    <property type="pathway name" value="RNA Polymerase II Transcription Initiation And Promoter Clearance"/>
</dbReference>
<dbReference type="Reactome" id="R-CEL-77075">
    <property type="pathway name" value="RNA Pol II CTD phosphorylation and interaction with CE"/>
</dbReference>
<dbReference type="Reactome" id="R-CEL-9018519">
    <property type="pathway name" value="Estrogen-dependent gene expression"/>
</dbReference>
<dbReference type="PRO" id="PR:Q9N5K2"/>
<dbReference type="Proteomes" id="UP000001940">
    <property type="component" value="Chromosome I"/>
</dbReference>
<dbReference type="Bgee" id="WBGene00019246">
    <property type="expression patterns" value="Expressed in germ line (C elegans) and 4 other cell types or tissues"/>
</dbReference>
<dbReference type="GO" id="GO:0005736">
    <property type="term" value="C:RNA polymerase I complex"/>
    <property type="evidence" value="ECO:0000318"/>
    <property type="project" value="GO_Central"/>
</dbReference>
<dbReference type="GO" id="GO:0005665">
    <property type="term" value="C:RNA polymerase II, core complex"/>
    <property type="evidence" value="ECO:0000318"/>
    <property type="project" value="GO_Central"/>
</dbReference>
<dbReference type="GO" id="GO:0005666">
    <property type="term" value="C:RNA polymerase III complex"/>
    <property type="evidence" value="ECO:0000318"/>
    <property type="project" value="GO_Central"/>
</dbReference>
<dbReference type="GO" id="GO:0003677">
    <property type="term" value="F:DNA binding"/>
    <property type="evidence" value="ECO:0007669"/>
    <property type="project" value="InterPro"/>
</dbReference>
<dbReference type="GO" id="GO:0003899">
    <property type="term" value="F:DNA-directed RNA polymerase activity"/>
    <property type="evidence" value="ECO:0007669"/>
    <property type="project" value="InterPro"/>
</dbReference>
<dbReference type="GO" id="GO:0006366">
    <property type="term" value="P:transcription by RNA polymerase II"/>
    <property type="evidence" value="ECO:0000318"/>
    <property type="project" value="GO_Central"/>
</dbReference>
<dbReference type="GO" id="GO:0006362">
    <property type="term" value="P:transcription elongation by RNA polymerase I"/>
    <property type="evidence" value="ECO:0000318"/>
    <property type="project" value="GO_Central"/>
</dbReference>
<dbReference type="GO" id="GO:0042797">
    <property type="term" value="P:tRNA transcription by RNA polymerase III"/>
    <property type="evidence" value="ECO:0000318"/>
    <property type="project" value="GO_Central"/>
</dbReference>
<dbReference type="FunFam" id="3.40.1340.10:FF:000001">
    <property type="entry name" value="DNA-directed RNA polymerases I, II, and III subunit RPABC1"/>
    <property type="match status" value="1"/>
</dbReference>
<dbReference type="FunFam" id="3.90.940.20:FF:000001">
    <property type="entry name" value="DNA-directed RNA polymerases I, II, and III subunit RPABC1"/>
    <property type="match status" value="1"/>
</dbReference>
<dbReference type="Gene3D" id="3.40.1340.10">
    <property type="entry name" value="RNA polymerase, Rpb5, N-terminal domain"/>
    <property type="match status" value="1"/>
</dbReference>
<dbReference type="Gene3D" id="3.90.940.20">
    <property type="entry name" value="RPB5-like RNA polymerase subunit"/>
    <property type="match status" value="1"/>
</dbReference>
<dbReference type="HAMAP" id="MF_00025">
    <property type="entry name" value="RNApol_Rpo5_RPB5"/>
    <property type="match status" value="1"/>
</dbReference>
<dbReference type="InterPro" id="IPR014381">
    <property type="entry name" value="Arch_Rpo5/euc_Rpb5"/>
</dbReference>
<dbReference type="InterPro" id="IPR005571">
    <property type="entry name" value="RNA_pol_Rpb5_N"/>
</dbReference>
<dbReference type="InterPro" id="IPR036710">
    <property type="entry name" value="RNA_pol_Rpb5_N_sf"/>
</dbReference>
<dbReference type="InterPro" id="IPR000783">
    <property type="entry name" value="RNA_pol_subH/Rpb5_C"/>
</dbReference>
<dbReference type="InterPro" id="IPR020608">
    <property type="entry name" value="RNA_pol_subH/Rpb5_CS"/>
</dbReference>
<dbReference type="InterPro" id="IPR035913">
    <property type="entry name" value="RPB5-like_sf"/>
</dbReference>
<dbReference type="NCBIfam" id="NF007129">
    <property type="entry name" value="PRK09570.1"/>
    <property type="match status" value="1"/>
</dbReference>
<dbReference type="PANTHER" id="PTHR10535">
    <property type="entry name" value="DNA-DIRECTED RNA POLYMERASES I, II, AND III SUBUNIT RPABC1"/>
    <property type="match status" value="1"/>
</dbReference>
<dbReference type="PANTHER" id="PTHR10535:SF0">
    <property type="entry name" value="DNA-DIRECTED RNA POLYMERASES I, II, AND III SUBUNIT RPABC1"/>
    <property type="match status" value="1"/>
</dbReference>
<dbReference type="Pfam" id="PF01191">
    <property type="entry name" value="RNA_pol_Rpb5_C"/>
    <property type="match status" value="1"/>
</dbReference>
<dbReference type="Pfam" id="PF03871">
    <property type="entry name" value="RNA_pol_Rpb5_N"/>
    <property type="match status" value="1"/>
</dbReference>
<dbReference type="PIRSF" id="PIRSF000747">
    <property type="entry name" value="RPB5"/>
    <property type="match status" value="1"/>
</dbReference>
<dbReference type="SUPFAM" id="SSF53036">
    <property type="entry name" value="Eukaryotic RPB5 N-terminal domain"/>
    <property type="match status" value="1"/>
</dbReference>
<dbReference type="SUPFAM" id="SSF55287">
    <property type="entry name" value="RPB5-like RNA polymerase subunit"/>
    <property type="match status" value="1"/>
</dbReference>
<dbReference type="PROSITE" id="PS01110">
    <property type="entry name" value="RNA_POL_H_23KD"/>
    <property type="match status" value="1"/>
</dbReference>
<gene>
    <name type="primary">rpb-5</name>
    <name type="ORF">H27M09.2</name>
</gene>